<geneLocation type="plasmid" evidence="8">
    <name>pWWU2</name>
</geneLocation>
<name>NAGG_RALSP</name>
<reference evidence="7 8" key="1">
    <citation type="journal article" date="1998" name="J. Bacteriol.">
        <title>A gene cluster encoding steps in conversion of naphthalene to gentisate in Pseudomonas sp. strain U2.</title>
        <authorList>
            <person name="Fuenmayor S.L."/>
            <person name="Wild M."/>
            <person name="Boyes A.L."/>
            <person name="Williams P.A."/>
        </authorList>
    </citation>
    <scope>NUCLEOTIDE SEQUENCE [GENOMIC DNA]</scope>
    <scope>FUNCTION</scope>
    <scope>PATHWAY</scope>
    <scope>DISRUPTION PHENOTYPE</scope>
    <scope>SUBUNIT</scope>
    <source>
        <strain evidence="8">U2</strain>
    </source>
</reference>
<reference evidence="7" key="2">
    <citation type="journal article" date="2002" name="J. Bacteriol.">
        <title>Salicylate 5-hydroxylase from Ralstonia sp. strain U2: a monooxygenase with close relationships to and shared electron transport proteins with naphthalene dioxygenase.</title>
        <authorList>
            <person name="Zhou N.Y."/>
            <person name="Al-Dulayymi J."/>
            <person name="Baird M.S."/>
            <person name="Williams P.A."/>
        </authorList>
    </citation>
    <scope>FUNCTION</scope>
    <scope>CATALYTIC ACTIVITY</scope>
    <scope>SUBSTRATE SPECIFICITY</scope>
    <scope>PATHWAY</scope>
    <scope>SUBUNIT</scope>
    <source>
        <strain evidence="5">U2</strain>
    </source>
</reference>
<accession>O52379</accession>
<feature type="chain" id="PRO_0000421808" description="Salicylate 5-hydroxylase, large oxygenase component">
    <location>
        <begin position="1"/>
        <end position="423"/>
    </location>
</feature>
<feature type="domain" description="Rieske" evidence="3">
    <location>
        <begin position="49"/>
        <end position="168"/>
    </location>
</feature>
<feature type="region of interest" description="Disordered" evidence="4">
    <location>
        <begin position="1"/>
        <end position="20"/>
    </location>
</feature>
<feature type="binding site" evidence="2 3">
    <location>
        <position position="91"/>
    </location>
    <ligand>
        <name>[2Fe-2S] cluster</name>
        <dbReference type="ChEBI" id="CHEBI:190135"/>
    </ligand>
</feature>
<feature type="binding site" evidence="2 3">
    <location>
        <position position="93"/>
    </location>
    <ligand>
        <name>[2Fe-2S] cluster</name>
        <dbReference type="ChEBI" id="CHEBI:190135"/>
    </ligand>
</feature>
<feature type="binding site" evidence="2 3">
    <location>
        <position position="111"/>
    </location>
    <ligand>
        <name>[2Fe-2S] cluster</name>
        <dbReference type="ChEBI" id="CHEBI:190135"/>
    </ligand>
</feature>
<feature type="binding site" evidence="2 3">
    <location>
        <position position="114"/>
    </location>
    <ligand>
        <name>[2Fe-2S] cluster</name>
        <dbReference type="ChEBI" id="CHEBI:190135"/>
    </ligand>
</feature>
<feature type="binding site" evidence="2">
    <location>
        <position position="224"/>
    </location>
    <ligand>
        <name>Fe cation</name>
        <dbReference type="ChEBI" id="CHEBI:24875"/>
    </ligand>
</feature>
<feature type="binding site" evidence="2">
    <location>
        <position position="229"/>
    </location>
    <ligand>
        <name>Fe cation</name>
        <dbReference type="ChEBI" id="CHEBI:24875"/>
    </ligand>
</feature>
<feature type="binding site" evidence="2">
    <location>
        <position position="370"/>
    </location>
    <ligand>
        <name>Fe cation</name>
        <dbReference type="ChEBI" id="CHEBI:24875"/>
    </ligand>
</feature>
<feature type="strand" evidence="9">
    <location>
        <begin position="18"/>
        <end position="23"/>
    </location>
</feature>
<feature type="helix" evidence="9">
    <location>
        <begin position="27"/>
        <end position="29"/>
    </location>
</feature>
<feature type="helix" evidence="9">
    <location>
        <begin position="33"/>
        <end position="43"/>
    </location>
</feature>
<feature type="strand" evidence="9">
    <location>
        <begin position="45"/>
        <end position="47"/>
    </location>
</feature>
<feature type="strand" evidence="9">
    <location>
        <begin position="50"/>
        <end position="54"/>
    </location>
</feature>
<feature type="helix" evidence="9">
    <location>
        <begin position="55"/>
        <end position="57"/>
    </location>
</feature>
<feature type="strand" evidence="9">
    <location>
        <begin position="63"/>
        <end position="69"/>
    </location>
</feature>
<feature type="strand" evidence="9">
    <location>
        <begin position="72"/>
        <end position="78"/>
    </location>
</feature>
<feature type="strand" evidence="9">
    <location>
        <begin position="84"/>
        <end position="89"/>
    </location>
</feature>
<feature type="turn" evidence="9">
    <location>
        <begin position="92"/>
        <end position="94"/>
    </location>
</feature>
<feature type="strand" evidence="9">
    <location>
        <begin position="101"/>
        <end position="105"/>
    </location>
</feature>
<feature type="strand" evidence="9">
    <location>
        <begin position="107"/>
        <end position="111"/>
    </location>
</feature>
<feature type="turn" evidence="9">
    <location>
        <begin position="112"/>
        <end position="115"/>
    </location>
</feature>
<feature type="strand" evidence="9">
    <location>
        <begin position="116"/>
        <end position="118"/>
    </location>
</feature>
<feature type="strand" evidence="9">
    <location>
        <begin position="124"/>
        <end position="126"/>
    </location>
</feature>
<feature type="turn" evidence="9">
    <location>
        <begin position="128"/>
        <end position="131"/>
    </location>
</feature>
<feature type="helix" evidence="9">
    <location>
        <begin position="149"/>
        <end position="151"/>
    </location>
</feature>
<feature type="strand" evidence="9">
    <location>
        <begin position="156"/>
        <end position="162"/>
    </location>
</feature>
<feature type="strand" evidence="9">
    <location>
        <begin position="165"/>
        <end position="170"/>
    </location>
</feature>
<feature type="helix" evidence="9">
    <location>
        <begin position="177"/>
        <end position="192"/>
    </location>
</feature>
<feature type="strand" evidence="9">
    <location>
        <begin position="198"/>
        <end position="208"/>
    </location>
</feature>
<feature type="helix" evidence="9">
    <location>
        <begin position="213"/>
        <end position="219"/>
    </location>
</feature>
<feature type="strand" evidence="9">
    <location>
        <begin position="222"/>
        <end position="224"/>
    </location>
</feature>
<feature type="helix" evidence="9">
    <location>
        <begin position="225"/>
        <end position="228"/>
    </location>
</feature>
<feature type="strand" evidence="9">
    <location>
        <begin position="244"/>
        <end position="248"/>
    </location>
</feature>
<feature type="strand" evidence="9">
    <location>
        <begin position="254"/>
        <end position="259"/>
    </location>
</feature>
<feature type="helix" evidence="9">
    <location>
        <begin position="286"/>
        <end position="288"/>
    </location>
</feature>
<feature type="strand" evidence="9">
    <location>
        <begin position="301"/>
        <end position="307"/>
    </location>
</feature>
<feature type="turn" evidence="9">
    <location>
        <begin position="308"/>
        <end position="310"/>
    </location>
</feature>
<feature type="strand" evidence="9">
    <location>
        <begin position="311"/>
        <end position="316"/>
    </location>
</feature>
<feature type="strand" evidence="9">
    <location>
        <begin position="319"/>
        <end position="327"/>
    </location>
</feature>
<feature type="strand" evidence="9">
    <location>
        <begin position="333"/>
        <end position="342"/>
    </location>
</feature>
<feature type="helix" evidence="9">
    <location>
        <begin position="347"/>
        <end position="356"/>
    </location>
</feature>
<feature type="helix" evidence="9">
    <location>
        <begin position="357"/>
        <end position="359"/>
    </location>
</feature>
<feature type="turn" evidence="9">
    <location>
        <begin position="365"/>
        <end position="367"/>
    </location>
</feature>
<feature type="helix" evidence="9">
    <location>
        <begin position="368"/>
        <end position="383"/>
    </location>
</feature>
<feature type="turn" evidence="9">
    <location>
        <begin position="393"/>
        <end position="396"/>
    </location>
</feature>
<feature type="strand" evidence="9">
    <location>
        <begin position="401"/>
        <end position="404"/>
    </location>
</feature>
<feature type="helix" evidence="9">
    <location>
        <begin position="408"/>
        <end position="421"/>
    </location>
</feature>
<organism>
    <name type="scientific">Ralstonia sp</name>
    <dbReference type="NCBI Taxonomy" id="54061"/>
    <lineage>
        <taxon>Bacteria</taxon>
        <taxon>Pseudomonadati</taxon>
        <taxon>Pseudomonadota</taxon>
        <taxon>Betaproteobacteria</taxon>
        <taxon>Burkholderiales</taxon>
        <taxon>Burkholderiaceae</taxon>
        <taxon>Ralstonia</taxon>
    </lineage>
</organism>
<evidence type="ECO:0000250" key="1"/>
<evidence type="ECO:0000250" key="2">
    <source>
        <dbReference type="UniProtKB" id="O85673"/>
    </source>
</evidence>
<evidence type="ECO:0000255" key="3">
    <source>
        <dbReference type="PROSITE-ProRule" id="PRU00628"/>
    </source>
</evidence>
<evidence type="ECO:0000256" key="4">
    <source>
        <dbReference type="SAM" id="MobiDB-lite"/>
    </source>
</evidence>
<evidence type="ECO:0000269" key="5">
    <source>
    </source>
</evidence>
<evidence type="ECO:0000269" key="6">
    <source>
    </source>
</evidence>
<evidence type="ECO:0000305" key="7"/>
<evidence type="ECO:0000312" key="8">
    <source>
        <dbReference type="EMBL" id="AAD12607.1"/>
    </source>
</evidence>
<evidence type="ECO:0007829" key="9">
    <source>
        <dbReference type="PDB" id="7C8Z"/>
    </source>
</evidence>
<comment type="function">
    <text evidence="5 6">Oxygenase component of the salicylate 5-hydroxylase (S5H) multicomponent enzyme system which catalyzes the 5-hydroxylation of salicylate to gentisate. Active only on substrates with a ring-substituted carboxylate group with an adjacent hydroxyl group. Primarily active against salicylate and substituted salicylates, but not against 2-hydroxycinnamate, 3-hydroxycinnamate, 2-hydroxyphenylacetate, 3-hydroxyphenylacetate, 2-hydroxybenzophenone, 1-hydroxy-2-naphthoate, 4-methoxysalicylate or 2-hydroxyacetophenone.</text>
</comment>
<comment type="catalytic activity">
    <reaction evidence="5">
        <text>salicylate + NADH + O2 + H(+) = 2,5-dihydroxybenzoate + NAD(+) + H2O</text>
        <dbReference type="Rhea" id="RHEA:35307"/>
        <dbReference type="ChEBI" id="CHEBI:15377"/>
        <dbReference type="ChEBI" id="CHEBI:15378"/>
        <dbReference type="ChEBI" id="CHEBI:15379"/>
        <dbReference type="ChEBI" id="CHEBI:30762"/>
        <dbReference type="ChEBI" id="CHEBI:57540"/>
        <dbReference type="ChEBI" id="CHEBI:57945"/>
        <dbReference type="ChEBI" id="CHEBI:58044"/>
        <dbReference type="EC" id="1.14.13.172"/>
    </reaction>
</comment>
<comment type="cofactor">
    <cofactor evidence="1">
        <name>Fe cation</name>
        <dbReference type="ChEBI" id="CHEBI:24875"/>
    </cofactor>
    <text evidence="1">Binds 1 Fe cation per subunit.</text>
</comment>
<comment type="cofactor">
    <cofactor evidence="3">
        <name>[2Fe-2S] cluster</name>
        <dbReference type="ChEBI" id="CHEBI:190135"/>
    </cofactor>
    <text evidence="3">Binds 1 [2Fe-2S] cluster per subunit.</text>
</comment>
<comment type="pathway">
    <text evidence="5 6">Aromatic compound metabolism; naphthalene degradation.</text>
</comment>
<comment type="subunit">
    <text evidence="5 6">The salicylate 5-hydroxylase (S5H) multicomponent enzyme system is composed of an electron transfer component and an oxygenase component. The electron transfer component is comprised of a ferredoxin reductase (NagAa) and a ferredoxin (NagAb), and the oxygenase component is formed by a large subunit (NagG) and a small subunit (NagH).</text>
</comment>
<comment type="disruption phenotype">
    <text evidence="6">Cells lacking this gene are not able to convert salicylate to gentisate.</text>
</comment>
<comment type="similarity">
    <text evidence="7">Belongs to the bacterial ring-hydroxylating dioxygenase alpha subunit family.</text>
</comment>
<proteinExistence type="evidence at protein level"/>
<protein>
    <recommendedName>
        <fullName>Salicylate 5-hydroxylase, large oxygenase component</fullName>
        <shortName>S5H large oxygenase component</shortName>
        <ecNumber>1.14.13.172</ecNumber>
    </recommendedName>
    <alternativeName>
        <fullName>Salicylate 5-hydroxylase, oxygenase component NagG</fullName>
    </alternativeName>
    <alternativeName>
        <fullName>Salicylate 5-monooxygenase, hydroxylase large subunit</fullName>
    </alternativeName>
</protein>
<dbReference type="EC" id="1.14.13.172"/>
<dbReference type="EMBL" id="AF036940">
    <property type="protein sequence ID" value="AAD12607.1"/>
    <property type="molecule type" value="Genomic_DNA"/>
</dbReference>
<dbReference type="PDB" id="7C8Z">
    <property type="method" value="X-ray"/>
    <property type="resolution" value="2.60 A"/>
    <property type="chains" value="A/C/E/G=1-423"/>
</dbReference>
<dbReference type="PDBsum" id="7C8Z"/>
<dbReference type="SMR" id="O52379"/>
<dbReference type="KEGG" id="ag:AAD12607"/>
<dbReference type="BioCyc" id="MetaCyc:MONOMER-14766"/>
<dbReference type="BRENDA" id="1.14.13.172">
    <property type="organism ID" value="5085"/>
</dbReference>
<dbReference type="UniPathway" id="UPA00082"/>
<dbReference type="GO" id="GO:1902494">
    <property type="term" value="C:catalytic complex"/>
    <property type="evidence" value="ECO:0000314"/>
    <property type="project" value="UniProtKB"/>
</dbReference>
<dbReference type="GO" id="GO:0051537">
    <property type="term" value="F:2 iron, 2 sulfur cluster binding"/>
    <property type="evidence" value="ECO:0007669"/>
    <property type="project" value="UniProtKB-KW"/>
</dbReference>
<dbReference type="GO" id="GO:0005506">
    <property type="term" value="F:iron ion binding"/>
    <property type="evidence" value="ECO:0007669"/>
    <property type="project" value="InterPro"/>
</dbReference>
<dbReference type="GO" id="GO:0034785">
    <property type="term" value="F:salicylate 5-hydroxylase activity"/>
    <property type="evidence" value="ECO:0007669"/>
    <property type="project" value="UniProtKB-EC"/>
</dbReference>
<dbReference type="GO" id="GO:0046244">
    <property type="term" value="P:salicylic acid catabolic process"/>
    <property type="evidence" value="ECO:0000316"/>
    <property type="project" value="UniProtKB"/>
</dbReference>
<dbReference type="CDD" id="cd08880">
    <property type="entry name" value="RHO_alpha_C_ahdA1c-like"/>
    <property type="match status" value="1"/>
</dbReference>
<dbReference type="CDD" id="cd03539">
    <property type="entry name" value="Rieske_RO_Alpha_S5H"/>
    <property type="match status" value="1"/>
</dbReference>
<dbReference type="Gene3D" id="3.90.380.10">
    <property type="entry name" value="Naphthalene 1,2-dioxygenase Alpha Subunit, Chain A, domain 1"/>
    <property type="match status" value="1"/>
</dbReference>
<dbReference type="Gene3D" id="2.102.10.10">
    <property type="entry name" value="Rieske [2Fe-2S] iron-sulphur domain"/>
    <property type="match status" value="1"/>
</dbReference>
<dbReference type="InterPro" id="IPR043264">
    <property type="entry name" value="AhdA1c-like_alpha_C"/>
</dbReference>
<dbReference type="InterPro" id="IPR017941">
    <property type="entry name" value="Rieske_2Fe-2S"/>
</dbReference>
<dbReference type="InterPro" id="IPR036922">
    <property type="entry name" value="Rieske_2Fe-2S_sf"/>
</dbReference>
<dbReference type="InterPro" id="IPR015881">
    <property type="entry name" value="Ring-hydroxy_dOase_2Fe2S_BS"/>
</dbReference>
<dbReference type="InterPro" id="IPR015879">
    <property type="entry name" value="Ring_hydroxy_dOase_asu_C_dom"/>
</dbReference>
<dbReference type="InterPro" id="IPR001663">
    <property type="entry name" value="Rng_hydr_dOase-A"/>
</dbReference>
<dbReference type="PANTHER" id="PTHR43756">
    <property type="entry name" value="CHOLINE MONOOXYGENASE, CHLOROPLASTIC"/>
    <property type="match status" value="1"/>
</dbReference>
<dbReference type="PANTHER" id="PTHR43756:SF5">
    <property type="entry name" value="CHOLINE MONOOXYGENASE, CHLOROPLASTIC"/>
    <property type="match status" value="1"/>
</dbReference>
<dbReference type="Pfam" id="PF00355">
    <property type="entry name" value="Rieske"/>
    <property type="match status" value="1"/>
</dbReference>
<dbReference type="Pfam" id="PF00848">
    <property type="entry name" value="Ring_hydroxyl_A"/>
    <property type="match status" value="1"/>
</dbReference>
<dbReference type="PRINTS" id="PR00090">
    <property type="entry name" value="RNGDIOXGNASE"/>
</dbReference>
<dbReference type="SUPFAM" id="SSF55961">
    <property type="entry name" value="Bet v1-like"/>
    <property type="match status" value="1"/>
</dbReference>
<dbReference type="SUPFAM" id="SSF50022">
    <property type="entry name" value="ISP domain"/>
    <property type="match status" value="1"/>
</dbReference>
<dbReference type="PROSITE" id="PS51296">
    <property type="entry name" value="RIESKE"/>
    <property type="match status" value="1"/>
</dbReference>
<dbReference type="PROSITE" id="PS00570">
    <property type="entry name" value="RING_HYDROXYL_ALPHA"/>
    <property type="match status" value="1"/>
</dbReference>
<keyword id="KW-0001">2Fe-2S</keyword>
<keyword id="KW-0002">3D-structure</keyword>
<keyword id="KW-0058">Aromatic hydrocarbons catabolism</keyword>
<keyword id="KW-0408">Iron</keyword>
<keyword id="KW-0411">Iron-sulfur</keyword>
<keyword id="KW-0479">Metal-binding</keyword>
<keyword id="KW-0503">Monooxygenase</keyword>
<keyword id="KW-0520">NAD</keyword>
<keyword id="KW-0560">Oxidoreductase</keyword>
<keyword id="KW-0614">Plasmid</keyword>
<gene>
    <name evidence="8" type="primary">nagG</name>
</gene>
<sequence>MSEPQRLKPVFPQDPKWPGEGSSRVPFWAYTREDLYKRELERLFYANHWCYVGLEAEIPNPGDFKRTVIGERSVIMVRDPDGGINVVENVCAHRGMRFCRERHGNAKDFFCPYHQWNYSLKGDLQGVPFRRGVKQDGKVNGGMPKDFKLEEHGLTKLKVAARGGAVFASFDHDVEPFEEFLGPTILHYFDRVFNGRKLKILGYRRQRIPGNWKLMQENIKDPYHPGLLHTWFSTFGLWRADNKSELKMDAKFRHAAMISTRGQGGKNEEVVSGVDSFKEQMKVNDPRLLDIVPEPWWGGPTAVMTTIFPSVIIQQQVNSVSTRHIQPNGHGSFDFVWTHFGFEDDNEEWTQRRLIQANLFGPAGFVSADDGEVIEWSQEGFEQKPTHRTVIEMGGHEIGDTDHMVTETLIRGMYDYWRKVMGE</sequence>